<gene>
    <name evidence="1" type="primary">tatC</name>
    <name type="ordered locus">UNCMA_19580</name>
    <name type="ORF">RCIX879</name>
</gene>
<name>TATC_METAR</name>
<proteinExistence type="inferred from homology"/>
<sequence>MAAESSLPPGDMEMSLSEHLRELRNRLIIVIAVTLLLMLAIFPFSAGLVDAVLAHAVPSYVKITTYAPMEMFKARLTMCFIGAITVGFPLLVYEAFRFAAPGLYPHEKRFLYLVFPFSLLLFVAGGLVAYFVTLPLFFSIVIGHGLEVAAPALSVGETFSIVTNFVAGLGLVFQVPLIIVLAIKMGLVKRETLVKGRLGVYGLLFGVAMFFSPDPTLFSQLIVLAVLAILFEVSMVLTRFL</sequence>
<organism>
    <name type="scientific">Methanocella arvoryzae (strain DSM 22066 / NBRC 105507 / MRE50)</name>
    <dbReference type="NCBI Taxonomy" id="351160"/>
    <lineage>
        <taxon>Archaea</taxon>
        <taxon>Methanobacteriati</taxon>
        <taxon>Methanobacteriota</taxon>
        <taxon>Stenosarchaea group</taxon>
        <taxon>Methanomicrobia</taxon>
        <taxon>Methanocellales</taxon>
        <taxon>Methanocellaceae</taxon>
        <taxon>Methanocella</taxon>
    </lineage>
</organism>
<accession>Q0W5V8</accession>
<dbReference type="EMBL" id="AM114193">
    <property type="protein sequence ID" value="CAJ36235.1"/>
    <property type="molecule type" value="Genomic_DNA"/>
</dbReference>
<dbReference type="RefSeq" id="WP_012036283.1">
    <property type="nucleotide sequence ID" value="NC_009464.1"/>
</dbReference>
<dbReference type="SMR" id="Q0W5V8"/>
<dbReference type="STRING" id="351160.RCIX879"/>
<dbReference type="GeneID" id="5142777"/>
<dbReference type="KEGG" id="rci:RCIX879"/>
<dbReference type="PATRIC" id="fig|351160.9.peg.2008"/>
<dbReference type="eggNOG" id="arCOG01919">
    <property type="taxonomic scope" value="Archaea"/>
</dbReference>
<dbReference type="OrthoDB" id="198870at2157"/>
<dbReference type="Proteomes" id="UP000000663">
    <property type="component" value="Chromosome"/>
</dbReference>
<dbReference type="GO" id="GO:0033281">
    <property type="term" value="C:TAT protein transport complex"/>
    <property type="evidence" value="ECO:0007669"/>
    <property type="project" value="UniProtKB-UniRule"/>
</dbReference>
<dbReference type="GO" id="GO:0009977">
    <property type="term" value="F:proton motive force dependent protein transmembrane transporter activity"/>
    <property type="evidence" value="ECO:0007669"/>
    <property type="project" value="TreeGrafter"/>
</dbReference>
<dbReference type="GO" id="GO:0065002">
    <property type="term" value="P:intracellular protein transmembrane transport"/>
    <property type="evidence" value="ECO:0007669"/>
    <property type="project" value="TreeGrafter"/>
</dbReference>
<dbReference type="GO" id="GO:0043953">
    <property type="term" value="P:protein transport by the Tat complex"/>
    <property type="evidence" value="ECO:0007669"/>
    <property type="project" value="UniProtKB-UniRule"/>
</dbReference>
<dbReference type="HAMAP" id="MF_00902">
    <property type="entry name" value="TatC"/>
    <property type="match status" value="1"/>
</dbReference>
<dbReference type="InterPro" id="IPR002033">
    <property type="entry name" value="TatC"/>
</dbReference>
<dbReference type="NCBIfam" id="TIGR00945">
    <property type="entry name" value="tatC"/>
    <property type="match status" value="1"/>
</dbReference>
<dbReference type="PANTHER" id="PTHR30371">
    <property type="entry name" value="SEC-INDEPENDENT PROTEIN TRANSLOCASE PROTEIN TATC"/>
    <property type="match status" value="1"/>
</dbReference>
<dbReference type="PANTHER" id="PTHR30371:SF0">
    <property type="entry name" value="SEC-INDEPENDENT PROTEIN TRANSLOCASE PROTEIN TATC, CHLOROPLASTIC-RELATED"/>
    <property type="match status" value="1"/>
</dbReference>
<dbReference type="Pfam" id="PF00902">
    <property type="entry name" value="TatC"/>
    <property type="match status" value="1"/>
</dbReference>
<dbReference type="PRINTS" id="PR01840">
    <property type="entry name" value="TATCFAMILY"/>
</dbReference>
<feature type="chain" id="PRO_0000412874" description="Sec-independent protein translocase protein TatC">
    <location>
        <begin position="1"/>
        <end position="241"/>
    </location>
</feature>
<feature type="transmembrane region" description="Helical" evidence="1">
    <location>
        <begin position="27"/>
        <end position="47"/>
    </location>
</feature>
<feature type="transmembrane region" description="Helical" evidence="1">
    <location>
        <begin position="76"/>
        <end position="96"/>
    </location>
</feature>
<feature type="transmembrane region" description="Helical" evidence="1">
    <location>
        <begin position="122"/>
        <end position="142"/>
    </location>
</feature>
<feature type="transmembrane region" description="Helical" evidence="1">
    <location>
        <begin position="161"/>
        <end position="181"/>
    </location>
</feature>
<feature type="transmembrane region" description="Helical" evidence="1">
    <location>
        <begin position="193"/>
        <end position="213"/>
    </location>
</feature>
<feature type="transmembrane region" description="Helical" evidence="1">
    <location>
        <begin position="217"/>
        <end position="237"/>
    </location>
</feature>
<comment type="function">
    <text evidence="1">Part of the twin-arginine translocation (Tat) system that transports large folded proteins containing a characteristic twin-arginine motif in their signal peptide across membranes.</text>
</comment>
<comment type="subunit">
    <text evidence="1">Forms a complex with TatA.</text>
</comment>
<comment type="subcellular location">
    <subcellularLocation>
        <location evidence="1">Cell membrane</location>
        <topology evidence="1">Multi-pass membrane protein</topology>
    </subcellularLocation>
</comment>
<comment type="similarity">
    <text evidence="1">Belongs to the TatC family.</text>
</comment>
<evidence type="ECO:0000255" key="1">
    <source>
        <dbReference type="HAMAP-Rule" id="MF_00902"/>
    </source>
</evidence>
<keyword id="KW-1003">Cell membrane</keyword>
<keyword id="KW-0472">Membrane</keyword>
<keyword id="KW-0653">Protein transport</keyword>
<keyword id="KW-1185">Reference proteome</keyword>
<keyword id="KW-0811">Translocation</keyword>
<keyword id="KW-0812">Transmembrane</keyword>
<keyword id="KW-1133">Transmembrane helix</keyword>
<keyword id="KW-0813">Transport</keyword>
<protein>
    <recommendedName>
        <fullName evidence="1">Sec-independent protein translocase protein TatC</fullName>
    </recommendedName>
</protein>
<reference key="1">
    <citation type="journal article" date="2006" name="Science">
        <title>Genome of rice cluster I archaea -- the key methane producers in the rice rhizosphere.</title>
        <authorList>
            <person name="Erkel C."/>
            <person name="Kube M."/>
            <person name="Reinhardt R."/>
            <person name="Liesack W."/>
        </authorList>
    </citation>
    <scope>NUCLEOTIDE SEQUENCE [LARGE SCALE GENOMIC DNA]</scope>
    <source>
        <strain>DSM 22066 / NBRC 105507 / MRE50</strain>
    </source>
</reference>